<sequence>MNPLDKIHALDEIEKEIILCMQSAGQALQELGKEKSSQKNAETQSQQFLKSLSSVESKLSEQINYLTQVSTGQPHEGSGYASAKVLQMAWHRIQHARSRVRELEETKAKHSHAARQQLKRQQEHAAAQQQQQQQQQQQQQQQQMQQAAQQQQQQTGGGNAGSGDHPMGGDSSMSTN</sequence>
<protein>
    <recommendedName>
        <fullName>Mediator of RNA polymerase II transcription subunit 11</fullName>
    </recommendedName>
    <alternativeName>
        <fullName>Mediator complex subunit 11</fullName>
    </alternativeName>
    <alternativeName>
        <fullName>dMED21</fullName>
    </alternativeName>
</protein>
<feature type="chain" id="PRO_0000304314" description="Mediator of RNA polymerase II transcription subunit 11">
    <location>
        <begin position="1"/>
        <end position="176"/>
    </location>
</feature>
<feature type="region of interest" description="Disordered" evidence="2">
    <location>
        <begin position="98"/>
        <end position="176"/>
    </location>
</feature>
<feature type="compositionally biased region" description="Basic and acidic residues" evidence="2">
    <location>
        <begin position="99"/>
        <end position="108"/>
    </location>
</feature>
<feature type="compositionally biased region" description="Low complexity" evidence="2">
    <location>
        <begin position="124"/>
        <end position="154"/>
    </location>
</feature>
<proteinExistence type="evidence at protein level"/>
<reference key="1">
    <citation type="journal article" date="2000" name="Science">
        <title>The genome sequence of Drosophila melanogaster.</title>
        <authorList>
            <person name="Adams M.D."/>
            <person name="Celniker S.E."/>
            <person name="Holt R.A."/>
            <person name="Evans C.A."/>
            <person name="Gocayne J.D."/>
            <person name="Amanatides P.G."/>
            <person name="Scherer S.E."/>
            <person name="Li P.W."/>
            <person name="Hoskins R.A."/>
            <person name="Galle R.F."/>
            <person name="George R.A."/>
            <person name="Lewis S.E."/>
            <person name="Richards S."/>
            <person name="Ashburner M."/>
            <person name="Henderson S.N."/>
            <person name="Sutton G.G."/>
            <person name="Wortman J.R."/>
            <person name="Yandell M.D."/>
            <person name="Zhang Q."/>
            <person name="Chen L.X."/>
            <person name="Brandon R.C."/>
            <person name="Rogers Y.-H.C."/>
            <person name="Blazej R.G."/>
            <person name="Champe M."/>
            <person name="Pfeiffer B.D."/>
            <person name="Wan K.H."/>
            <person name="Doyle C."/>
            <person name="Baxter E.G."/>
            <person name="Helt G."/>
            <person name="Nelson C.R."/>
            <person name="Miklos G.L.G."/>
            <person name="Abril J.F."/>
            <person name="Agbayani A."/>
            <person name="An H.-J."/>
            <person name="Andrews-Pfannkoch C."/>
            <person name="Baldwin D."/>
            <person name="Ballew R.M."/>
            <person name="Basu A."/>
            <person name="Baxendale J."/>
            <person name="Bayraktaroglu L."/>
            <person name="Beasley E.M."/>
            <person name="Beeson K.Y."/>
            <person name="Benos P.V."/>
            <person name="Berman B.P."/>
            <person name="Bhandari D."/>
            <person name="Bolshakov S."/>
            <person name="Borkova D."/>
            <person name="Botchan M.R."/>
            <person name="Bouck J."/>
            <person name="Brokstein P."/>
            <person name="Brottier P."/>
            <person name="Burtis K.C."/>
            <person name="Busam D.A."/>
            <person name="Butler H."/>
            <person name="Cadieu E."/>
            <person name="Center A."/>
            <person name="Chandra I."/>
            <person name="Cherry J.M."/>
            <person name="Cawley S."/>
            <person name="Dahlke C."/>
            <person name="Davenport L.B."/>
            <person name="Davies P."/>
            <person name="de Pablos B."/>
            <person name="Delcher A."/>
            <person name="Deng Z."/>
            <person name="Mays A.D."/>
            <person name="Dew I."/>
            <person name="Dietz S.M."/>
            <person name="Dodson K."/>
            <person name="Doup L.E."/>
            <person name="Downes M."/>
            <person name="Dugan-Rocha S."/>
            <person name="Dunkov B.C."/>
            <person name="Dunn P."/>
            <person name="Durbin K.J."/>
            <person name="Evangelista C.C."/>
            <person name="Ferraz C."/>
            <person name="Ferriera S."/>
            <person name="Fleischmann W."/>
            <person name="Fosler C."/>
            <person name="Gabrielian A.E."/>
            <person name="Garg N.S."/>
            <person name="Gelbart W.M."/>
            <person name="Glasser K."/>
            <person name="Glodek A."/>
            <person name="Gong F."/>
            <person name="Gorrell J.H."/>
            <person name="Gu Z."/>
            <person name="Guan P."/>
            <person name="Harris M."/>
            <person name="Harris N.L."/>
            <person name="Harvey D.A."/>
            <person name="Heiman T.J."/>
            <person name="Hernandez J.R."/>
            <person name="Houck J."/>
            <person name="Hostin D."/>
            <person name="Houston K.A."/>
            <person name="Howland T.J."/>
            <person name="Wei M.-H."/>
            <person name="Ibegwam C."/>
            <person name="Jalali M."/>
            <person name="Kalush F."/>
            <person name="Karpen G.H."/>
            <person name="Ke Z."/>
            <person name="Kennison J.A."/>
            <person name="Ketchum K.A."/>
            <person name="Kimmel B.E."/>
            <person name="Kodira C.D."/>
            <person name="Kraft C.L."/>
            <person name="Kravitz S."/>
            <person name="Kulp D."/>
            <person name="Lai Z."/>
            <person name="Lasko P."/>
            <person name="Lei Y."/>
            <person name="Levitsky A.A."/>
            <person name="Li J.H."/>
            <person name="Li Z."/>
            <person name="Liang Y."/>
            <person name="Lin X."/>
            <person name="Liu X."/>
            <person name="Mattei B."/>
            <person name="McIntosh T.C."/>
            <person name="McLeod M.P."/>
            <person name="McPherson D."/>
            <person name="Merkulov G."/>
            <person name="Milshina N.V."/>
            <person name="Mobarry C."/>
            <person name="Morris J."/>
            <person name="Moshrefi A."/>
            <person name="Mount S.M."/>
            <person name="Moy M."/>
            <person name="Murphy B."/>
            <person name="Murphy L."/>
            <person name="Muzny D.M."/>
            <person name="Nelson D.L."/>
            <person name="Nelson D.R."/>
            <person name="Nelson K.A."/>
            <person name="Nixon K."/>
            <person name="Nusskern D.R."/>
            <person name="Pacleb J.M."/>
            <person name="Palazzolo M."/>
            <person name="Pittman G.S."/>
            <person name="Pan S."/>
            <person name="Pollard J."/>
            <person name="Puri V."/>
            <person name="Reese M.G."/>
            <person name="Reinert K."/>
            <person name="Remington K."/>
            <person name="Saunders R.D.C."/>
            <person name="Scheeler F."/>
            <person name="Shen H."/>
            <person name="Shue B.C."/>
            <person name="Siden-Kiamos I."/>
            <person name="Simpson M."/>
            <person name="Skupski M.P."/>
            <person name="Smith T.J."/>
            <person name="Spier E."/>
            <person name="Spradling A.C."/>
            <person name="Stapleton M."/>
            <person name="Strong R."/>
            <person name="Sun E."/>
            <person name="Svirskas R."/>
            <person name="Tector C."/>
            <person name="Turner R."/>
            <person name="Venter E."/>
            <person name="Wang A.H."/>
            <person name="Wang X."/>
            <person name="Wang Z.-Y."/>
            <person name="Wassarman D.A."/>
            <person name="Weinstock G.M."/>
            <person name="Weissenbach J."/>
            <person name="Williams S.M."/>
            <person name="Woodage T."/>
            <person name="Worley K.C."/>
            <person name="Wu D."/>
            <person name="Yang S."/>
            <person name="Yao Q.A."/>
            <person name="Ye J."/>
            <person name="Yeh R.-F."/>
            <person name="Zaveri J.S."/>
            <person name="Zhan M."/>
            <person name="Zhang G."/>
            <person name="Zhao Q."/>
            <person name="Zheng L."/>
            <person name="Zheng X.H."/>
            <person name="Zhong F.N."/>
            <person name="Zhong W."/>
            <person name="Zhou X."/>
            <person name="Zhu S.C."/>
            <person name="Zhu X."/>
            <person name="Smith H.O."/>
            <person name="Gibbs R.A."/>
            <person name="Myers E.W."/>
            <person name="Rubin G.M."/>
            <person name="Venter J.C."/>
        </authorList>
    </citation>
    <scope>NUCLEOTIDE SEQUENCE [LARGE SCALE GENOMIC DNA]</scope>
    <source>
        <strain>Berkeley</strain>
    </source>
</reference>
<reference key="2">
    <citation type="journal article" date="2002" name="Genome Biol.">
        <title>Annotation of the Drosophila melanogaster euchromatic genome: a systematic review.</title>
        <authorList>
            <person name="Misra S."/>
            <person name="Crosby M.A."/>
            <person name="Mungall C.J."/>
            <person name="Matthews B.B."/>
            <person name="Campbell K.S."/>
            <person name="Hradecky P."/>
            <person name="Huang Y."/>
            <person name="Kaminker J.S."/>
            <person name="Millburn G.H."/>
            <person name="Prochnik S.E."/>
            <person name="Smith C.D."/>
            <person name="Tupy J.L."/>
            <person name="Whitfield E.J."/>
            <person name="Bayraktaroglu L."/>
            <person name="Berman B.P."/>
            <person name="Bettencourt B.R."/>
            <person name="Celniker S.E."/>
            <person name="de Grey A.D.N.J."/>
            <person name="Drysdale R.A."/>
            <person name="Harris N.L."/>
            <person name="Richter J."/>
            <person name="Russo S."/>
            <person name="Schroeder A.J."/>
            <person name="Shu S.Q."/>
            <person name="Stapleton M."/>
            <person name="Yamada C."/>
            <person name="Ashburner M."/>
            <person name="Gelbart W.M."/>
            <person name="Rubin G.M."/>
            <person name="Lewis S.E."/>
        </authorList>
    </citation>
    <scope>GENOME REANNOTATION</scope>
    <source>
        <strain>Berkeley</strain>
    </source>
</reference>
<reference key="3">
    <citation type="journal article" date="2002" name="Genome Biol.">
        <title>A Drosophila full-length cDNA resource.</title>
        <authorList>
            <person name="Stapleton M."/>
            <person name="Carlson J.W."/>
            <person name="Brokstein P."/>
            <person name="Yu C."/>
            <person name="Champe M."/>
            <person name="George R.A."/>
            <person name="Guarin H."/>
            <person name="Kronmiller B."/>
            <person name="Pacleb J.M."/>
            <person name="Park S."/>
            <person name="Wan K.H."/>
            <person name="Rubin G.M."/>
            <person name="Celniker S.E."/>
        </authorList>
    </citation>
    <scope>NUCLEOTIDE SEQUENCE [LARGE SCALE MRNA]</scope>
    <source>
        <strain>Berkeley</strain>
        <tissue>Head</tissue>
    </source>
</reference>
<reference key="4">
    <citation type="journal article" date="2002" name="J. Biol. Chem.">
        <title>Novel Mediator proteins of the small Mediator complex in Drosophila SL2 cells.</title>
        <authorList>
            <person name="Gu J.-Y."/>
            <person name="Park J.M."/>
            <person name="Song E.J."/>
            <person name="Mizuguchi G."/>
            <person name="Yoon J.H."/>
            <person name="Kim-Ha J."/>
            <person name="Lee K.-J."/>
            <person name="Kim Y.-J."/>
        </authorList>
    </citation>
    <scope>IDENTIFICATION BY MASS SPECTROMETRY</scope>
    <scope>IDENTIFICATION IN THE MEDIATOR COMPLEX</scope>
    <scope>FUNCTION OF THE MEDIATOR COMPLEX</scope>
    <scope>INTERACTION WITH MED6 AND MED17</scope>
</reference>
<name>MED11_DROME</name>
<evidence type="ECO:0000250" key="1">
    <source>
        <dbReference type="UniProtKB" id="Q9P086"/>
    </source>
</evidence>
<evidence type="ECO:0000256" key="2">
    <source>
        <dbReference type="SAM" id="MobiDB-lite"/>
    </source>
</evidence>
<evidence type="ECO:0000269" key="3">
    <source>
    </source>
</evidence>
<evidence type="ECO:0000305" key="4"/>
<comment type="function">
    <text evidence="1 3">Component of the Mediator complex, a coactivator involved in the regulated transcription of nearly all RNA polymerase II-dependent genes. Mediator functions as a bridge to convey information from gene-specific regulatory proteins to the basal RNA polymerase II transcription machinery. Mediator is recruited to promoters by direct interactions with regulatory proteins and serves as a scaffold for the assembly of a functional pre-initiation complex with RNA polymerase II and the general transcription factors (By similarity).</text>
</comment>
<comment type="subunit">
    <text evidence="3">Component of the Mediator complex, which may include CDK8, MED4, MED6, MED11, MED14, MED17, MED18, MED20, MED21, MED22, MED27, MED28, MED30 and MED31.</text>
</comment>
<comment type="subcellular location">
    <subcellularLocation>
        <location evidence="4">Nucleus</location>
    </subcellularLocation>
</comment>
<comment type="similarity">
    <text evidence="4">Belongs to the Mediator complex subunit 11 family.</text>
</comment>
<accession>Q9VVS4</accession>
<gene>
    <name type="primary">MED11</name>
    <name type="synonym">Med21</name>
    <name type="ORF">CG6884</name>
</gene>
<dbReference type="EMBL" id="AE014296">
    <property type="protein sequence ID" value="AAF49235.1"/>
    <property type="molecule type" value="Genomic_DNA"/>
</dbReference>
<dbReference type="EMBL" id="AY102649">
    <property type="protein sequence ID" value="AAM27478.1"/>
    <property type="molecule type" value="mRNA"/>
</dbReference>
<dbReference type="RefSeq" id="NP_649057.1">
    <property type="nucleotide sequence ID" value="NM_140800.3"/>
</dbReference>
<dbReference type="SMR" id="Q9VVS4"/>
<dbReference type="BioGRID" id="65323">
    <property type="interactions" value="39"/>
</dbReference>
<dbReference type="ComplexPortal" id="CPX-2308">
    <property type="entry name" value="Core mediator complex"/>
</dbReference>
<dbReference type="FunCoup" id="Q9VVS4">
    <property type="interactions" value="536"/>
</dbReference>
<dbReference type="IntAct" id="Q9VVS4">
    <property type="interactions" value="57"/>
</dbReference>
<dbReference type="STRING" id="7227.FBpp0074821"/>
<dbReference type="PaxDb" id="7227-FBpp0074821"/>
<dbReference type="DNASU" id="40042"/>
<dbReference type="EnsemblMetazoa" id="FBtr0075054">
    <property type="protein sequence ID" value="FBpp0074821"/>
    <property type="gene ID" value="FBgn0036811"/>
</dbReference>
<dbReference type="GeneID" id="40042"/>
<dbReference type="KEGG" id="dme:Dmel_CG6884"/>
<dbReference type="AGR" id="FB:FBgn0036811"/>
<dbReference type="CTD" id="400569"/>
<dbReference type="FlyBase" id="FBgn0036811">
    <property type="gene designation" value="MED11"/>
</dbReference>
<dbReference type="VEuPathDB" id="VectorBase:FBgn0036811"/>
<dbReference type="eggNOG" id="KOG4057">
    <property type="taxonomic scope" value="Eukaryota"/>
</dbReference>
<dbReference type="GeneTree" id="ENSGT00390000010184"/>
<dbReference type="HOGENOM" id="CLU_123010_0_0_1"/>
<dbReference type="InParanoid" id="Q9VVS4"/>
<dbReference type="OMA" id="WHRIQHV"/>
<dbReference type="OrthoDB" id="5418434at2759"/>
<dbReference type="PhylomeDB" id="Q9VVS4"/>
<dbReference type="BioGRID-ORCS" id="40042">
    <property type="hits" value="0 hits in 1 CRISPR screen"/>
</dbReference>
<dbReference type="GenomeRNAi" id="40042"/>
<dbReference type="PRO" id="PR:Q9VVS4"/>
<dbReference type="Proteomes" id="UP000000803">
    <property type="component" value="Chromosome 3L"/>
</dbReference>
<dbReference type="Bgee" id="FBgn0036811">
    <property type="expression patterns" value="Expressed in adult enteroendocrine precursor cell in adult midgut (Drosophila) and 71 other cell types or tissues"/>
</dbReference>
<dbReference type="GO" id="GO:0016592">
    <property type="term" value="C:mediator complex"/>
    <property type="evidence" value="ECO:0000314"/>
    <property type="project" value="UniProtKB"/>
</dbReference>
<dbReference type="GO" id="GO:0005634">
    <property type="term" value="C:nucleus"/>
    <property type="evidence" value="ECO:0000314"/>
    <property type="project" value="FlyBase"/>
</dbReference>
<dbReference type="GO" id="GO:0003713">
    <property type="term" value="F:transcription coactivator activity"/>
    <property type="evidence" value="ECO:0000250"/>
    <property type="project" value="FlyBase"/>
</dbReference>
<dbReference type="GO" id="GO:0003712">
    <property type="term" value="F:transcription coregulator activity"/>
    <property type="evidence" value="ECO:0000315"/>
    <property type="project" value="UniProtKB"/>
</dbReference>
<dbReference type="GO" id="GO:0006357">
    <property type="term" value="P:regulation of transcription by RNA polymerase II"/>
    <property type="evidence" value="ECO:0000315"/>
    <property type="project" value="UniProtKB"/>
</dbReference>
<dbReference type="FunFam" id="1.10.287.3490:FF:000001">
    <property type="entry name" value="Mediator of RNA polymerase II transcription subunit 11"/>
    <property type="match status" value="1"/>
</dbReference>
<dbReference type="Gene3D" id="1.10.287.3490">
    <property type="match status" value="1"/>
</dbReference>
<dbReference type="InterPro" id="IPR019404">
    <property type="entry name" value="Mediator_Med11"/>
</dbReference>
<dbReference type="PANTHER" id="PTHR22890">
    <property type="entry name" value="MEDIATOR OF RNA POLYMERASE II TRANSCRIPTION SUBUNIT 11"/>
    <property type="match status" value="1"/>
</dbReference>
<dbReference type="Pfam" id="PF10280">
    <property type="entry name" value="Med11"/>
    <property type="match status" value="1"/>
</dbReference>
<keyword id="KW-0010">Activator</keyword>
<keyword id="KW-0539">Nucleus</keyword>
<keyword id="KW-1185">Reference proteome</keyword>
<keyword id="KW-0804">Transcription</keyword>
<keyword id="KW-0805">Transcription regulation</keyword>
<organism>
    <name type="scientific">Drosophila melanogaster</name>
    <name type="common">Fruit fly</name>
    <dbReference type="NCBI Taxonomy" id="7227"/>
    <lineage>
        <taxon>Eukaryota</taxon>
        <taxon>Metazoa</taxon>
        <taxon>Ecdysozoa</taxon>
        <taxon>Arthropoda</taxon>
        <taxon>Hexapoda</taxon>
        <taxon>Insecta</taxon>
        <taxon>Pterygota</taxon>
        <taxon>Neoptera</taxon>
        <taxon>Endopterygota</taxon>
        <taxon>Diptera</taxon>
        <taxon>Brachycera</taxon>
        <taxon>Muscomorpha</taxon>
        <taxon>Ephydroidea</taxon>
        <taxon>Drosophilidae</taxon>
        <taxon>Drosophila</taxon>
        <taxon>Sophophora</taxon>
    </lineage>
</organism>